<gene>
    <name evidence="1" type="primary">fbp</name>
    <name type="ordered locus">YPDSF_3569</name>
</gene>
<protein>
    <recommendedName>
        <fullName evidence="1">Fructose-1,6-bisphosphatase class 1</fullName>
        <shortName evidence="1">FBPase class 1</shortName>
        <ecNumber evidence="1">3.1.3.11</ecNumber>
    </recommendedName>
    <alternativeName>
        <fullName evidence="1">D-fructose-1,6-bisphosphate 1-phosphohydrolase class 1</fullName>
    </alternativeName>
</protein>
<name>F16PA_YERPP</name>
<dbReference type="EC" id="3.1.3.11" evidence="1"/>
<dbReference type="EMBL" id="CP000668">
    <property type="protein sequence ID" value="ABP41919.1"/>
    <property type="molecule type" value="Genomic_DNA"/>
</dbReference>
<dbReference type="RefSeq" id="WP_011191626.1">
    <property type="nucleotide sequence ID" value="NZ_CP009715.1"/>
</dbReference>
<dbReference type="SMR" id="A4TRK7"/>
<dbReference type="GeneID" id="96663958"/>
<dbReference type="KEGG" id="ypp:YPDSF_3569"/>
<dbReference type="PATRIC" id="fig|386656.14.peg.226"/>
<dbReference type="UniPathway" id="UPA00138"/>
<dbReference type="GO" id="GO:0005829">
    <property type="term" value="C:cytosol"/>
    <property type="evidence" value="ECO:0007669"/>
    <property type="project" value="TreeGrafter"/>
</dbReference>
<dbReference type="GO" id="GO:0042132">
    <property type="term" value="F:fructose 1,6-bisphosphate 1-phosphatase activity"/>
    <property type="evidence" value="ECO:0007669"/>
    <property type="project" value="UniProtKB-UniRule"/>
</dbReference>
<dbReference type="GO" id="GO:0000287">
    <property type="term" value="F:magnesium ion binding"/>
    <property type="evidence" value="ECO:0007669"/>
    <property type="project" value="UniProtKB-UniRule"/>
</dbReference>
<dbReference type="GO" id="GO:0030388">
    <property type="term" value="P:fructose 1,6-bisphosphate metabolic process"/>
    <property type="evidence" value="ECO:0007669"/>
    <property type="project" value="TreeGrafter"/>
</dbReference>
<dbReference type="GO" id="GO:0006002">
    <property type="term" value="P:fructose 6-phosphate metabolic process"/>
    <property type="evidence" value="ECO:0007669"/>
    <property type="project" value="TreeGrafter"/>
</dbReference>
<dbReference type="GO" id="GO:0006000">
    <property type="term" value="P:fructose metabolic process"/>
    <property type="evidence" value="ECO:0007669"/>
    <property type="project" value="TreeGrafter"/>
</dbReference>
<dbReference type="GO" id="GO:0006094">
    <property type="term" value="P:gluconeogenesis"/>
    <property type="evidence" value="ECO:0007669"/>
    <property type="project" value="UniProtKB-UniRule"/>
</dbReference>
<dbReference type="GO" id="GO:0005986">
    <property type="term" value="P:sucrose biosynthetic process"/>
    <property type="evidence" value="ECO:0007669"/>
    <property type="project" value="TreeGrafter"/>
</dbReference>
<dbReference type="CDD" id="cd00354">
    <property type="entry name" value="FBPase"/>
    <property type="match status" value="1"/>
</dbReference>
<dbReference type="FunFam" id="3.30.540.10:FF:000002">
    <property type="entry name" value="Fructose-1,6-bisphosphatase class 1"/>
    <property type="match status" value="1"/>
</dbReference>
<dbReference type="FunFam" id="3.40.190.80:FF:000001">
    <property type="entry name" value="Fructose-1,6-bisphosphatase class 1"/>
    <property type="match status" value="1"/>
</dbReference>
<dbReference type="Gene3D" id="3.40.190.80">
    <property type="match status" value="1"/>
</dbReference>
<dbReference type="Gene3D" id="3.30.540.10">
    <property type="entry name" value="Fructose-1,6-Bisphosphatase, subunit A, domain 1"/>
    <property type="match status" value="1"/>
</dbReference>
<dbReference type="HAMAP" id="MF_01855">
    <property type="entry name" value="FBPase_class1"/>
    <property type="match status" value="1"/>
</dbReference>
<dbReference type="InterPro" id="IPR044015">
    <property type="entry name" value="FBPase_C_dom"/>
</dbReference>
<dbReference type="InterPro" id="IPR000146">
    <property type="entry name" value="FBPase_class-1"/>
</dbReference>
<dbReference type="InterPro" id="IPR033391">
    <property type="entry name" value="FBPase_N"/>
</dbReference>
<dbReference type="InterPro" id="IPR028343">
    <property type="entry name" value="FBPtase"/>
</dbReference>
<dbReference type="InterPro" id="IPR020548">
    <property type="entry name" value="Fructose_bisphosphatase_AS"/>
</dbReference>
<dbReference type="NCBIfam" id="NF006778">
    <property type="entry name" value="PRK09293.1-1"/>
    <property type="match status" value="1"/>
</dbReference>
<dbReference type="PANTHER" id="PTHR11556">
    <property type="entry name" value="FRUCTOSE-1,6-BISPHOSPHATASE-RELATED"/>
    <property type="match status" value="1"/>
</dbReference>
<dbReference type="PANTHER" id="PTHR11556:SF35">
    <property type="entry name" value="SEDOHEPTULOSE-1,7-BISPHOSPHATASE, CHLOROPLASTIC"/>
    <property type="match status" value="1"/>
</dbReference>
<dbReference type="Pfam" id="PF00316">
    <property type="entry name" value="FBPase"/>
    <property type="match status" value="1"/>
</dbReference>
<dbReference type="Pfam" id="PF18913">
    <property type="entry name" value="FBPase_C"/>
    <property type="match status" value="1"/>
</dbReference>
<dbReference type="PIRSF" id="PIRSF500210">
    <property type="entry name" value="FBPtase"/>
    <property type="match status" value="1"/>
</dbReference>
<dbReference type="PIRSF" id="PIRSF000904">
    <property type="entry name" value="FBPtase_SBPase"/>
    <property type="match status" value="1"/>
</dbReference>
<dbReference type="PRINTS" id="PR00115">
    <property type="entry name" value="F16BPHPHTASE"/>
</dbReference>
<dbReference type="SUPFAM" id="SSF56655">
    <property type="entry name" value="Carbohydrate phosphatase"/>
    <property type="match status" value="1"/>
</dbReference>
<dbReference type="PROSITE" id="PS00124">
    <property type="entry name" value="FBPASE"/>
    <property type="match status" value="1"/>
</dbReference>
<evidence type="ECO:0000255" key="1">
    <source>
        <dbReference type="HAMAP-Rule" id="MF_01855"/>
    </source>
</evidence>
<organism>
    <name type="scientific">Yersinia pestis (strain Pestoides F)</name>
    <dbReference type="NCBI Taxonomy" id="386656"/>
    <lineage>
        <taxon>Bacteria</taxon>
        <taxon>Pseudomonadati</taxon>
        <taxon>Pseudomonadota</taxon>
        <taxon>Gammaproteobacteria</taxon>
        <taxon>Enterobacterales</taxon>
        <taxon>Yersiniaceae</taxon>
        <taxon>Yersinia</taxon>
    </lineage>
</organism>
<reference key="1">
    <citation type="submission" date="2007-02" db="EMBL/GenBank/DDBJ databases">
        <title>Complete sequence of chromosome of Yersinia pestis Pestoides F.</title>
        <authorList>
            <consortium name="US DOE Joint Genome Institute"/>
            <person name="Copeland A."/>
            <person name="Lucas S."/>
            <person name="Lapidus A."/>
            <person name="Barry K."/>
            <person name="Detter J.C."/>
            <person name="Glavina del Rio T."/>
            <person name="Hammon N."/>
            <person name="Israni S."/>
            <person name="Dalin E."/>
            <person name="Tice H."/>
            <person name="Pitluck S."/>
            <person name="Di Bartolo G."/>
            <person name="Chain P."/>
            <person name="Malfatti S."/>
            <person name="Shin M."/>
            <person name="Vergez L."/>
            <person name="Schmutz J."/>
            <person name="Larimer F."/>
            <person name="Land M."/>
            <person name="Hauser L."/>
            <person name="Worsham P."/>
            <person name="Chu M."/>
            <person name="Bearden S."/>
            <person name="Garcia E."/>
            <person name="Richardson P."/>
        </authorList>
    </citation>
    <scope>NUCLEOTIDE SEQUENCE [LARGE SCALE GENOMIC DNA]</scope>
    <source>
        <strain>Pestoides F</strain>
    </source>
</reference>
<keyword id="KW-0119">Carbohydrate metabolism</keyword>
<keyword id="KW-0963">Cytoplasm</keyword>
<keyword id="KW-0378">Hydrolase</keyword>
<keyword id="KW-0460">Magnesium</keyword>
<keyword id="KW-0479">Metal-binding</keyword>
<accession>A4TRK7</accession>
<feature type="chain" id="PRO_0000364760" description="Fructose-1,6-bisphosphatase class 1">
    <location>
        <begin position="1"/>
        <end position="337"/>
    </location>
</feature>
<feature type="binding site" evidence="1">
    <location>
        <position position="89"/>
    </location>
    <ligand>
        <name>Mg(2+)</name>
        <dbReference type="ChEBI" id="CHEBI:18420"/>
        <label>1</label>
    </ligand>
</feature>
<feature type="binding site" evidence="1">
    <location>
        <position position="112"/>
    </location>
    <ligand>
        <name>Mg(2+)</name>
        <dbReference type="ChEBI" id="CHEBI:18420"/>
        <label>1</label>
    </ligand>
</feature>
<feature type="binding site" evidence="1">
    <location>
        <position position="112"/>
    </location>
    <ligand>
        <name>Mg(2+)</name>
        <dbReference type="ChEBI" id="CHEBI:18420"/>
        <label>2</label>
    </ligand>
</feature>
<feature type="binding site" evidence="1">
    <location>
        <position position="114"/>
    </location>
    <ligand>
        <name>Mg(2+)</name>
        <dbReference type="ChEBI" id="CHEBI:18420"/>
        <label>1</label>
    </ligand>
</feature>
<feature type="binding site" evidence="1">
    <location>
        <begin position="115"/>
        <end position="118"/>
    </location>
    <ligand>
        <name>substrate</name>
    </ligand>
</feature>
<feature type="binding site" evidence="1">
    <location>
        <position position="115"/>
    </location>
    <ligand>
        <name>Mg(2+)</name>
        <dbReference type="ChEBI" id="CHEBI:18420"/>
        <label>2</label>
    </ligand>
</feature>
<feature type="binding site" evidence="1">
    <location>
        <position position="208"/>
    </location>
    <ligand>
        <name>substrate</name>
    </ligand>
</feature>
<feature type="binding site" evidence="1">
    <location>
        <position position="241"/>
    </location>
    <ligand>
        <name>substrate</name>
    </ligand>
</feature>
<feature type="binding site" evidence="1">
    <location>
        <position position="271"/>
    </location>
    <ligand>
        <name>substrate</name>
    </ligand>
</feature>
<feature type="binding site" evidence="1">
    <location>
        <position position="277"/>
    </location>
    <ligand>
        <name>Mg(2+)</name>
        <dbReference type="ChEBI" id="CHEBI:18420"/>
        <label>2</label>
    </ligand>
</feature>
<sequence length="337" mass="36966">MKTLGEFIVEKQLDFSHATGELTALLSAIKLGAKIIHRDINKAGLVDILGASGVSNIQGEDQMKLDLFANEKLKAALKARGEVAGIASEEEDDIVIFDGGRAENAKYVVLMDPLDGSSNIDVNVSVGTIFSIYRRITPFGTPITEEDFLQPGTKQVAAGYVVYGSSTMLVYTTGYGVHAFTYDPSLGVFCLSHEKVRYPATGCMYSINEGNYIKFPLGVKKYIKYCQEQDEATKRPYTSRYIGSLVADFHRNLLKGGIYIYPSTASHPQGKLRLLYECNPMAFLAEQAGGKATDGVNRILDIVPEKLHQRAPFFVGTKSMVEDAEGFIAKFPDEEAK</sequence>
<proteinExistence type="inferred from homology"/>
<comment type="catalytic activity">
    <reaction evidence="1">
        <text>beta-D-fructose 1,6-bisphosphate + H2O = beta-D-fructose 6-phosphate + phosphate</text>
        <dbReference type="Rhea" id="RHEA:11064"/>
        <dbReference type="ChEBI" id="CHEBI:15377"/>
        <dbReference type="ChEBI" id="CHEBI:32966"/>
        <dbReference type="ChEBI" id="CHEBI:43474"/>
        <dbReference type="ChEBI" id="CHEBI:57634"/>
        <dbReference type="EC" id="3.1.3.11"/>
    </reaction>
</comment>
<comment type="cofactor">
    <cofactor evidence="1">
        <name>Mg(2+)</name>
        <dbReference type="ChEBI" id="CHEBI:18420"/>
    </cofactor>
    <text evidence="1">Binds 2 magnesium ions per subunit.</text>
</comment>
<comment type="pathway">
    <text evidence="1">Carbohydrate biosynthesis; gluconeogenesis.</text>
</comment>
<comment type="subunit">
    <text evidence="1">Homotetramer.</text>
</comment>
<comment type="subcellular location">
    <subcellularLocation>
        <location evidence="1">Cytoplasm</location>
    </subcellularLocation>
</comment>
<comment type="similarity">
    <text evidence="1">Belongs to the FBPase class 1 family.</text>
</comment>